<dbReference type="EMBL" id="BA000031">
    <property type="protein sequence ID" value="BAC59004.1"/>
    <property type="status" value="ALT_INIT"/>
    <property type="molecule type" value="Genomic_DNA"/>
</dbReference>
<dbReference type="RefSeq" id="NP_797120.1">
    <property type="nucleotide sequence ID" value="NC_004603.1"/>
</dbReference>
<dbReference type="SMR" id="Q87RN6"/>
<dbReference type="KEGG" id="vpa:VP0741"/>
<dbReference type="PATRIC" id="fig|223926.6.peg.708"/>
<dbReference type="eggNOG" id="COG3017">
    <property type="taxonomic scope" value="Bacteria"/>
</dbReference>
<dbReference type="HOGENOM" id="CLU_092816_1_0_6"/>
<dbReference type="Proteomes" id="UP000002493">
    <property type="component" value="Chromosome 1"/>
</dbReference>
<dbReference type="GO" id="GO:0009279">
    <property type="term" value="C:cell outer membrane"/>
    <property type="evidence" value="ECO:0007669"/>
    <property type="project" value="UniProtKB-SubCell"/>
</dbReference>
<dbReference type="GO" id="GO:0044874">
    <property type="term" value="P:lipoprotein localization to outer membrane"/>
    <property type="evidence" value="ECO:0007669"/>
    <property type="project" value="UniProtKB-UniRule"/>
</dbReference>
<dbReference type="GO" id="GO:0015031">
    <property type="term" value="P:protein transport"/>
    <property type="evidence" value="ECO:0007669"/>
    <property type="project" value="UniProtKB-KW"/>
</dbReference>
<dbReference type="CDD" id="cd16326">
    <property type="entry name" value="LolB"/>
    <property type="match status" value="1"/>
</dbReference>
<dbReference type="Gene3D" id="2.50.20.10">
    <property type="entry name" value="Lipoprotein localisation LolA/LolB/LppX"/>
    <property type="match status" value="1"/>
</dbReference>
<dbReference type="HAMAP" id="MF_00233">
    <property type="entry name" value="LolB"/>
    <property type="match status" value="1"/>
</dbReference>
<dbReference type="InterPro" id="IPR029046">
    <property type="entry name" value="LolA/LolB/LppX"/>
</dbReference>
<dbReference type="InterPro" id="IPR004565">
    <property type="entry name" value="OM_lipoprot_LolB"/>
</dbReference>
<dbReference type="NCBIfam" id="TIGR00548">
    <property type="entry name" value="lolB"/>
    <property type="match status" value="1"/>
</dbReference>
<dbReference type="Pfam" id="PF03550">
    <property type="entry name" value="LolB"/>
    <property type="match status" value="1"/>
</dbReference>
<dbReference type="SUPFAM" id="SSF89392">
    <property type="entry name" value="Prokaryotic lipoproteins and lipoprotein localization factors"/>
    <property type="match status" value="1"/>
</dbReference>
<dbReference type="PROSITE" id="PS51257">
    <property type="entry name" value="PROKAR_LIPOPROTEIN"/>
    <property type="match status" value="1"/>
</dbReference>
<keyword id="KW-0998">Cell outer membrane</keyword>
<keyword id="KW-0143">Chaperone</keyword>
<keyword id="KW-0449">Lipoprotein</keyword>
<keyword id="KW-0472">Membrane</keyword>
<keyword id="KW-0564">Palmitate</keyword>
<keyword id="KW-0653">Protein transport</keyword>
<keyword id="KW-0732">Signal</keyword>
<keyword id="KW-0813">Transport</keyword>
<accession>Q87RN6</accession>
<name>LOLB_VIBPA</name>
<gene>
    <name evidence="1" type="primary">lolB</name>
    <name type="ordered locus">VP0741</name>
</gene>
<evidence type="ECO:0000255" key="1">
    <source>
        <dbReference type="HAMAP-Rule" id="MF_00233"/>
    </source>
</evidence>
<evidence type="ECO:0000305" key="2"/>
<sequence length="203" mass="23004">MTLRSFLIFFLSSLILAGCSSVPESVTSVEWQAHEQRLETIHDFQATGKLGYIGPDQRQSLNFFWKHSTALSQLRLTTVLGQTALKLTITPQGATVETYDDQVLSARNANQLIYRLTGLMMPVDHMPDWLLGLPTDADTFQLSPANTLQTLDKQIGLNDWKIAYERYGDVEWHEQTLPLPNKLKLTTSDVKINLVITKWNITQ</sequence>
<protein>
    <recommendedName>
        <fullName evidence="1">Outer-membrane lipoprotein LolB</fullName>
    </recommendedName>
</protein>
<comment type="function">
    <text evidence="1">Plays a critical role in the incorporation of lipoproteins in the outer membrane after they are released by the LolA protein.</text>
</comment>
<comment type="subunit">
    <text evidence="1">Monomer.</text>
</comment>
<comment type="subcellular location">
    <subcellularLocation>
        <location evidence="1">Cell outer membrane</location>
        <topology evidence="1">Lipid-anchor</topology>
    </subcellularLocation>
</comment>
<comment type="similarity">
    <text evidence="1">Belongs to the LolB family.</text>
</comment>
<comment type="sequence caution" evidence="2">
    <conflict type="erroneous initiation">
        <sequence resource="EMBL-CDS" id="BAC59004"/>
    </conflict>
</comment>
<proteinExistence type="inferred from homology"/>
<reference key="1">
    <citation type="journal article" date="2003" name="Lancet">
        <title>Genome sequence of Vibrio parahaemolyticus: a pathogenic mechanism distinct from that of V. cholerae.</title>
        <authorList>
            <person name="Makino K."/>
            <person name="Oshima K."/>
            <person name="Kurokawa K."/>
            <person name="Yokoyama K."/>
            <person name="Uda T."/>
            <person name="Tagomori K."/>
            <person name="Iijima Y."/>
            <person name="Najima M."/>
            <person name="Nakano M."/>
            <person name="Yamashita A."/>
            <person name="Kubota Y."/>
            <person name="Kimura S."/>
            <person name="Yasunaga T."/>
            <person name="Honda T."/>
            <person name="Shinagawa H."/>
            <person name="Hattori M."/>
            <person name="Iida T."/>
        </authorList>
    </citation>
    <scope>NUCLEOTIDE SEQUENCE [LARGE SCALE GENOMIC DNA]</scope>
    <source>
        <strain>RIMD 2210633</strain>
    </source>
</reference>
<feature type="signal peptide" evidence="1">
    <location>
        <begin position="1"/>
        <end position="18"/>
    </location>
</feature>
<feature type="chain" id="PRO_0000018315" description="Outer-membrane lipoprotein LolB">
    <location>
        <begin position="19"/>
        <end position="203"/>
    </location>
</feature>
<feature type="lipid moiety-binding region" description="N-palmitoyl cysteine" evidence="1">
    <location>
        <position position="19"/>
    </location>
</feature>
<feature type="lipid moiety-binding region" description="S-diacylglycerol cysteine" evidence="1">
    <location>
        <position position="19"/>
    </location>
</feature>
<organism>
    <name type="scientific">Vibrio parahaemolyticus serotype O3:K6 (strain RIMD 2210633)</name>
    <dbReference type="NCBI Taxonomy" id="223926"/>
    <lineage>
        <taxon>Bacteria</taxon>
        <taxon>Pseudomonadati</taxon>
        <taxon>Pseudomonadota</taxon>
        <taxon>Gammaproteobacteria</taxon>
        <taxon>Vibrionales</taxon>
        <taxon>Vibrionaceae</taxon>
        <taxon>Vibrio</taxon>
    </lineage>
</organism>